<protein>
    <recommendedName>
        <fullName>S-adenosylmethionine decarboxylase proenzyme</fullName>
        <shortName>AdoMetDC</shortName>
        <shortName>SAMDC</shortName>
        <ecNumber evidence="3">4.1.1.50</ecNumber>
    </recommendedName>
    <component>
        <recommendedName>
            <fullName>S-adenosylmethionine decarboxylase alpha chain</fullName>
        </recommendedName>
    </component>
    <component>
        <recommendedName>
            <fullName>S-adenosylmethionine decarboxylase beta chain</fullName>
        </recommendedName>
    </component>
</protein>
<reference key="1">
    <citation type="journal article" date="1990" name="Gene">
        <title>Nucleotide sequence of rat S-adenosylmethionine decarboxylase cDNA. Comparison with an intronless rat pseudogene.</title>
        <authorList>
            <person name="Pulkka A."/>
            <person name="Keraenen M.R."/>
            <person name="Salmela A."/>
            <person name="Salmikangas P."/>
            <person name="Ihalainen R."/>
            <person name="Pajunen A."/>
        </authorList>
    </citation>
    <scope>NUCLEOTIDE SEQUENCE [MRNA]</scope>
</reference>
<reference key="2">
    <citation type="journal article" date="1988" name="J. Biol. Chem.">
        <title>Structure and regulation of mammalian S-adenosylmethionine decarboxylase.</title>
        <authorList>
            <person name="Pajunen A."/>
            <person name="Crozat A."/>
            <person name="Jaenne O.A."/>
            <person name="Ihalainen R."/>
            <person name="Laitinen P.H."/>
            <person name="Stanley B."/>
            <person name="Madhubala R."/>
            <person name="Pegg A.E."/>
        </authorList>
    </citation>
    <scope>NUCLEOTIDE SEQUENCE [GENOMIC DNA]</scope>
    <scope>PROTEOLYTIC CLEAVAGE</scope>
</reference>
<reference key="3">
    <citation type="journal article" date="1991" name="FEBS Lett.">
        <title>Structure and organization of the gene encoding rat S-adenosylmethionine decarboxylase.</title>
        <authorList>
            <person name="Pulkka A."/>
            <person name="Ihalainen R."/>
            <person name="Aatsinki J."/>
            <person name="Pajunen A."/>
        </authorList>
    </citation>
    <scope>NUCLEOTIDE SEQUENCE [GENOMIC DNA]</scope>
</reference>
<reference key="4">
    <citation type="journal article" date="1993" name="Genomics">
        <title>Structures and chromosomal localizations of two rat genes encoding S-adenosylmethionine decarboxylase.</title>
        <authorList>
            <person name="Pulkka A."/>
            <person name="Ihalainen R."/>
            <person name="Suorsa A."/>
            <person name="Riviere M."/>
            <person name="Szpirer J."/>
            <person name="Pajunen A."/>
        </authorList>
    </citation>
    <scope>NUCLEOTIDE SEQUENCE [GENOMIC DNA]</scope>
    <source>
        <strain>Wistar</strain>
        <tissue>Spleen</tissue>
    </source>
</reference>
<reference key="5">
    <citation type="journal article" date="2004" name="Genome Res.">
        <title>The status, quality, and expansion of the NIH full-length cDNA project: the Mammalian Gene Collection (MGC).</title>
        <authorList>
            <consortium name="The MGC Project Team"/>
        </authorList>
    </citation>
    <scope>NUCLEOTIDE SEQUENCE [LARGE SCALE MRNA]</scope>
    <source>
        <tissue>Pituitary</tissue>
    </source>
</reference>
<sequence length="333" mass="38137">MEAAHFFEGTEKLLEVWFSRQQSDASQGSGDLRTIPRSEWDVLLKDVQCSIISVTKTDKQEAYVLSESSMFVSKRRFILKTCGTTLLLKALVPLLKLARDYSGFDSIQSFFYSRKNFMKPSHQGYPHRNFQEEIEFLNAIFPNGAAYCMGRMNSDCWYLYTLDLPESRVINQPDQTLEILMSELDPAVMDQFYMKDGVTAKDVTRESGIRDLIPGSVIDATLFNPCGYSMNGMKSDGTYWTIHITPEPEFSYVSFETNLSQTSYDDLIRKVVEVFKPGKFVTTLFVNQSSKCRTVLSSPQKIDGFKRLDCQSAMFNDYNFVFTSFAKKQQQQS</sequence>
<accession>P17708</accession>
<dbReference type="EC" id="4.1.1.50" evidence="3"/>
<dbReference type="EMBL" id="M34464">
    <property type="protein sequence ID" value="AAA40683.1"/>
    <property type="molecule type" value="mRNA"/>
</dbReference>
<dbReference type="EMBL" id="M64274">
    <property type="protein sequence ID" value="AAA42105.1"/>
    <property type="molecule type" value="Genomic_DNA"/>
</dbReference>
<dbReference type="EMBL" id="Z15109">
    <property type="protein sequence ID" value="CAA78814.1"/>
    <property type="molecule type" value="Genomic_DNA"/>
</dbReference>
<dbReference type="EMBL" id="Z15122">
    <property type="protein sequence ID" value="CAA78814.1"/>
    <property type="status" value="JOINED"/>
    <property type="molecule type" value="Genomic_DNA"/>
</dbReference>
<dbReference type="EMBL" id="Z15123">
    <property type="protein sequence ID" value="CAA78814.1"/>
    <property type="status" value="JOINED"/>
    <property type="molecule type" value="Genomic_DNA"/>
</dbReference>
<dbReference type="EMBL" id="BC061532">
    <property type="protein sequence ID" value="AAH61532.1"/>
    <property type="molecule type" value="mRNA"/>
</dbReference>
<dbReference type="PIR" id="JQ0439">
    <property type="entry name" value="DCRTDM"/>
</dbReference>
<dbReference type="RefSeq" id="NP_112273.3">
    <property type="nucleotide sequence ID" value="NM_031011.3"/>
</dbReference>
<dbReference type="RefSeq" id="XP_063135627.1">
    <property type="nucleotide sequence ID" value="XM_063279557.1"/>
</dbReference>
<dbReference type="SMR" id="P17708"/>
<dbReference type="BioGRID" id="249540">
    <property type="interactions" value="1"/>
</dbReference>
<dbReference type="FunCoup" id="P17708">
    <property type="interactions" value="2779"/>
</dbReference>
<dbReference type="STRING" id="10116.ENSRNOP00000000715"/>
<dbReference type="BindingDB" id="P17708"/>
<dbReference type="ChEMBL" id="CHEMBL3808"/>
<dbReference type="DrugCentral" id="P17708"/>
<dbReference type="iPTMnet" id="P17708"/>
<dbReference type="PhosphoSitePlus" id="P17708"/>
<dbReference type="PaxDb" id="10116-ENSRNOP00000000715"/>
<dbReference type="GeneID" id="81640"/>
<dbReference type="KEGG" id="rno:81640"/>
<dbReference type="UCSC" id="RGD:2104">
    <property type="organism name" value="rat"/>
</dbReference>
<dbReference type="AGR" id="RGD:2104"/>
<dbReference type="CTD" id="262"/>
<dbReference type="RGD" id="2104">
    <property type="gene designation" value="Amd1"/>
</dbReference>
<dbReference type="VEuPathDB" id="HostDB:ENSRNOG00000000585"/>
<dbReference type="eggNOG" id="KOG0788">
    <property type="taxonomic scope" value="Eukaryota"/>
</dbReference>
<dbReference type="HOGENOM" id="CLU_023050_1_0_1"/>
<dbReference type="InParanoid" id="P17708"/>
<dbReference type="OrthoDB" id="11861at9989"/>
<dbReference type="Reactome" id="R-RNO-351202">
    <property type="pathway name" value="Metabolism of polyamines"/>
</dbReference>
<dbReference type="UniPathway" id="UPA00331">
    <property type="reaction ID" value="UER00451"/>
</dbReference>
<dbReference type="PRO" id="PR:P17708"/>
<dbReference type="Proteomes" id="UP000002494">
    <property type="component" value="Chromosome 20"/>
</dbReference>
<dbReference type="Bgee" id="ENSRNOG00000000585">
    <property type="expression patterns" value="Expressed in stomach and 19 other cell types or tissues"/>
</dbReference>
<dbReference type="GO" id="GO:0005829">
    <property type="term" value="C:cytosol"/>
    <property type="evidence" value="ECO:0000318"/>
    <property type="project" value="GO_Central"/>
</dbReference>
<dbReference type="GO" id="GO:0004014">
    <property type="term" value="F:adenosylmethionine decarboxylase activity"/>
    <property type="evidence" value="ECO:0000314"/>
    <property type="project" value="RGD"/>
</dbReference>
<dbReference type="GO" id="GO:0042802">
    <property type="term" value="F:identical protein binding"/>
    <property type="evidence" value="ECO:0000266"/>
    <property type="project" value="RGD"/>
</dbReference>
<dbReference type="GO" id="GO:0019810">
    <property type="term" value="F:putrescine binding"/>
    <property type="evidence" value="ECO:0000314"/>
    <property type="project" value="RGD"/>
</dbReference>
<dbReference type="GO" id="GO:0006595">
    <property type="term" value="P:polyamine metabolic process"/>
    <property type="evidence" value="ECO:0000314"/>
    <property type="project" value="RGD"/>
</dbReference>
<dbReference type="GO" id="GO:0046500">
    <property type="term" value="P:S-adenosylmethionine metabolic process"/>
    <property type="evidence" value="ECO:0000314"/>
    <property type="project" value="RGD"/>
</dbReference>
<dbReference type="GO" id="GO:0008295">
    <property type="term" value="P:spermidine biosynthetic process"/>
    <property type="evidence" value="ECO:0000314"/>
    <property type="project" value="RGD"/>
</dbReference>
<dbReference type="GO" id="GO:0006597">
    <property type="term" value="P:spermine biosynthetic process"/>
    <property type="evidence" value="ECO:0000314"/>
    <property type="project" value="RGD"/>
</dbReference>
<dbReference type="FunFam" id="3.60.90.10:FF:000003">
    <property type="entry name" value="S-adenosylmethionine decarboxylase proenzyme"/>
    <property type="match status" value="1"/>
</dbReference>
<dbReference type="FunFam" id="3.30.360.50:FF:000003">
    <property type="entry name" value="S-adenosylmethionine decarboxylase proenzyme isoform X2"/>
    <property type="match status" value="1"/>
</dbReference>
<dbReference type="Gene3D" id="3.60.90.10">
    <property type="entry name" value="S-adenosylmethionine decarboxylase"/>
    <property type="match status" value="1"/>
</dbReference>
<dbReference type="InterPro" id="IPR048283">
    <property type="entry name" value="AdoMetDC-like"/>
</dbReference>
<dbReference type="InterPro" id="IPR001985">
    <property type="entry name" value="S-AdoMet_decarboxylase_euk"/>
</dbReference>
<dbReference type="InterPro" id="IPR016067">
    <property type="entry name" value="S-AdoMet_deCO2ase_core"/>
</dbReference>
<dbReference type="InterPro" id="IPR018166">
    <property type="entry name" value="S-AdoMet_deCO2ase_CS"/>
</dbReference>
<dbReference type="NCBIfam" id="TIGR00535">
    <property type="entry name" value="SAM_DCase"/>
    <property type="match status" value="1"/>
</dbReference>
<dbReference type="PANTHER" id="PTHR11570">
    <property type="entry name" value="S-ADENOSYLMETHIONINE DECARBOXYLASE"/>
    <property type="match status" value="1"/>
</dbReference>
<dbReference type="PANTHER" id="PTHR11570:SF0">
    <property type="entry name" value="S-ADENOSYLMETHIONINE DECARBOXYLASE PROENZYME"/>
    <property type="match status" value="1"/>
</dbReference>
<dbReference type="Pfam" id="PF01536">
    <property type="entry name" value="SAM_decarbox"/>
    <property type="match status" value="1"/>
</dbReference>
<dbReference type="PIRSF" id="PIRSF001355">
    <property type="entry name" value="S-AdenosylMet_decarboxylase"/>
    <property type="match status" value="1"/>
</dbReference>
<dbReference type="SUPFAM" id="SSF56276">
    <property type="entry name" value="S-adenosylmethionine decarboxylase"/>
    <property type="match status" value="1"/>
</dbReference>
<dbReference type="PROSITE" id="PS01336">
    <property type="entry name" value="ADOMETDC"/>
    <property type="match status" value="1"/>
</dbReference>
<organism>
    <name type="scientific">Rattus norvegicus</name>
    <name type="common">Rat</name>
    <dbReference type="NCBI Taxonomy" id="10116"/>
    <lineage>
        <taxon>Eukaryota</taxon>
        <taxon>Metazoa</taxon>
        <taxon>Chordata</taxon>
        <taxon>Craniata</taxon>
        <taxon>Vertebrata</taxon>
        <taxon>Euteleostomi</taxon>
        <taxon>Mammalia</taxon>
        <taxon>Eutheria</taxon>
        <taxon>Euarchontoglires</taxon>
        <taxon>Glires</taxon>
        <taxon>Rodentia</taxon>
        <taxon>Myomorpha</taxon>
        <taxon>Muroidea</taxon>
        <taxon>Muridae</taxon>
        <taxon>Murinae</taxon>
        <taxon>Rattus</taxon>
    </lineage>
</organism>
<keyword id="KW-0068">Autocatalytic cleavage</keyword>
<keyword id="KW-0210">Decarboxylase</keyword>
<keyword id="KW-0456">Lyase</keyword>
<keyword id="KW-0597">Phosphoprotein</keyword>
<keyword id="KW-0620">Polyamine biosynthesis</keyword>
<keyword id="KW-0670">Pyruvate</keyword>
<keyword id="KW-1185">Reference proteome</keyword>
<keyword id="KW-0949">S-adenosyl-L-methionine</keyword>
<keyword id="KW-0704">Schiff base</keyword>
<keyword id="KW-0745">Spermidine biosynthesis</keyword>
<keyword id="KW-0865">Zymogen</keyword>
<name>DCAM_RAT</name>
<proteinExistence type="evidence at protein level"/>
<gene>
    <name type="primary">Amd1</name>
</gene>
<comment type="function">
    <text evidence="2">Essential for biosynthesis of the polyamines spermidine and spermine. Promotes maintenance and self-renewal of embryonic stem cells, by maintaining spermine levels.</text>
</comment>
<comment type="catalytic activity">
    <reaction evidence="3">
        <text>S-adenosyl-L-methionine + H(+) = S-adenosyl 3-(methylsulfanyl)propylamine + CO2</text>
        <dbReference type="Rhea" id="RHEA:15981"/>
        <dbReference type="ChEBI" id="CHEBI:15378"/>
        <dbReference type="ChEBI" id="CHEBI:16526"/>
        <dbReference type="ChEBI" id="CHEBI:57443"/>
        <dbReference type="ChEBI" id="CHEBI:59789"/>
        <dbReference type="EC" id="4.1.1.50"/>
    </reaction>
</comment>
<comment type="cofactor">
    <cofactor>
        <name>pyruvate</name>
        <dbReference type="ChEBI" id="CHEBI:15361"/>
    </cofactor>
    <text>Binds 1 pyruvoyl group covalently per subunit.</text>
</comment>
<comment type="pathway">
    <text>Amine and polyamine biosynthesis; S-adenosylmethioninamine biosynthesis; S-adenosylmethioninamine from S-adenosyl-L-methionine: step 1/1.</text>
</comment>
<comment type="subunit">
    <text evidence="1">Heterotetramer of two alpha and two beta chains.</text>
</comment>
<comment type="PTM">
    <text evidence="3 4">Is synthesized initially as an inactive proenzyme. Formation of the active enzyme involves a self-maturation process in which the active site pyruvoyl group is generated from an internal serine residue via an autocatalytic post-translational modification. Two non-identical subunits are generated from the proenzyme in this reaction, and the pyruvate is formed at the N-terminus of the alpha chain, which is derived from the carboxyl end of the proenzyme. The post-translation cleavage follows an unusual pathway, termed non-hydrolytic serinolysis, in which the side chain hydroxyl group of the serine supplies its oxygen atom to form the C-terminus of the beta chain, while the remainder of the serine residue undergoes an oxidative deamination to produce ammonia and the pyruvoyl group blocking the N-terminus of the alpha chain.</text>
</comment>
<comment type="similarity">
    <text evidence="5">Belongs to the eukaryotic AdoMetDC family.</text>
</comment>
<feature type="chain" id="PRO_0000029969" description="S-adenosylmethionine decarboxylase beta chain">
    <location>
        <begin position="1"/>
        <end position="67"/>
    </location>
</feature>
<feature type="chain" id="PRO_0000029970" description="S-adenosylmethionine decarboxylase alpha chain">
    <location>
        <begin position="68"/>
        <end position="333"/>
    </location>
</feature>
<feature type="active site" evidence="3">
    <location>
        <position position="8"/>
    </location>
</feature>
<feature type="active site" evidence="3">
    <location>
        <position position="11"/>
    </location>
</feature>
<feature type="active site" description="Schiff-base intermediate with substrate; via pyruvic acid" evidence="3">
    <location>
        <position position="68"/>
    </location>
</feature>
<feature type="active site" description="Proton donor; for catalytic activity" evidence="3">
    <location>
        <position position="82"/>
    </location>
</feature>
<feature type="active site" description="Proton acceptor; for processing activity" evidence="3">
    <location>
        <position position="229"/>
    </location>
</feature>
<feature type="active site" description="Proton acceptor; for processing activity" evidence="3">
    <location>
        <position position="243"/>
    </location>
</feature>
<feature type="binding site" evidence="3">
    <location>
        <position position="7"/>
    </location>
    <ligand>
        <name>substrate</name>
    </ligand>
</feature>
<feature type="binding site" evidence="3">
    <location>
        <position position="67"/>
    </location>
    <ligand>
        <name>substrate</name>
    </ligand>
</feature>
<feature type="binding site" evidence="3">
    <location>
        <position position="223"/>
    </location>
    <ligand>
        <name>substrate</name>
    </ligand>
</feature>
<feature type="binding site" evidence="3">
    <location>
        <position position="247"/>
    </location>
    <ligand>
        <name>substrate</name>
    </ligand>
</feature>
<feature type="site" description="Cleavage (non-hydrolytic); by autolysis" evidence="3">
    <location>
        <begin position="67"/>
        <end position="68"/>
    </location>
</feature>
<feature type="modified residue" description="Pyruvic acid (Ser); by autocatalysis" evidence="3">
    <location>
        <position position="68"/>
    </location>
</feature>
<feature type="modified residue" description="Phosphoserine" evidence="3">
    <location>
        <position position="298"/>
    </location>
</feature>
<feature type="sequence conflict" description="In Ref. 2." evidence="5" ref="2">
    <original>H</original>
    <variation>P</variation>
    <location>
        <position position="5"/>
    </location>
</feature>
<feature type="sequence conflict" description="In Ref. 1; AAA40683." evidence="5" ref="1">
    <original>A</original>
    <variation>G</variation>
    <location>
        <position position="146"/>
    </location>
</feature>
<evidence type="ECO:0000250" key="1"/>
<evidence type="ECO:0000250" key="2">
    <source>
        <dbReference type="UniProtKB" id="P0DMN7"/>
    </source>
</evidence>
<evidence type="ECO:0000250" key="3">
    <source>
        <dbReference type="UniProtKB" id="P17707"/>
    </source>
</evidence>
<evidence type="ECO:0000269" key="4">
    <source>
    </source>
</evidence>
<evidence type="ECO:0000305" key="5"/>